<accession>P0DA96</accession>
<accession>P64087</accession>
<accession>Q8P266</accession>
<organism>
    <name type="scientific">Streptococcus pyogenes serotype M3 (strain ATCC BAA-595 / MGAS315)</name>
    <dbReference type="NCBI Taxonomy" id="198466"/>
    <lineage>
        <taxon>Bacteria</taxon>
        <taxon>Bacillati</taxon>
        <taxon>Bacillota</taxon>
        <taxon>Bacilli</taxon>
        <taxon>Lactobacillales</taxon>
        <taxon>Streptococcaceae</taxon>
        <taxon>Streptococcus</taxon>
    </lineage>
</organism>
<proteinExistence type="inferred from homology"/>
<reference key="1">
    <citation type="journal article" date="2002" name="Proc. Natl. Acad. Sci. U.S.A.">
        <title>Genome sequence of a serotype M3 strain of group A Streptococcus: phage-encoded toxins, the high-virulence phenotype, and clone emergence.</title>
        <authorList>
            <person name="Beres S.B."/>
            <person name="Sylva G.L."/>
            <person name="Barbian K.D."/>
            <person name="Lei B."/>
            <person name="Hoff J.S."/>
            <person name="Mammarella N.D."/>
            <person name="Liu M.-Y."/>
            <person name="Smoot J.C."/>
            <person name="Porcella S.F."/>
            <person name="Parkins L.D."/>
            <person name="Campbell D.S."/>
            <person name="Smith T.M."/>
            <person name="McCormick J.K."/>
            <person name="Leung D.Y.M."/>
            <person name="Schlievert P.M."/>
            <person name="Musser J.M."/>
        </authorList>
    </citation>
    <scope>NUCLEOTIDE SEQUENCE [LARGE SCALE GENOMIC DNA]</scope>
    <source>
        <strain>ATCC BAA-595 / MGAS315</strain>
    </source>
</reference>
<gene>
    <name evidence="1" type="primary">era</name>
    <name type="ordered locus">SpyM3_0337</name>
</gene>
<dbReference type="EMBL" id="AE014074">
    <property type="protein sequence ID" value="AAM78944.1"/>
    <property type="molecule type" value="Genomic_DNA"/>
</dbReference>
<dbReference type="RefSeq" id="WP_002985743.1">
    <property type="nucleotide sequence ID" value="NC_004070.1"/>
</dbReference>
<dbReference type="SMR" id="P0DA96"/>
<dbReference type="GeneID" id="69901289"/>
<dbReference type="KEGG" id="spg:SpyM3_0337"/>
<dbReference type="HOGENOM" id="CLU_038009_1_0_9"/>
<dbReference type="Proteomes" id="UP000000564">
    <property type="component" value="Chromosome"/>
</dbReference>
<dbReference type="GO" id="GO:0005829">
    <property type="term" value="C:cytosol"/>
    <property type="evidence" value="ECO:0007669"/>
    <property type="project" value="TreeGrafter"/>
</dbReference>
<dbReference type="GO" id="GO:0005886">
    <property type="term" value="C:plasma membrane"/>
    <property type="evidence" value="ECO:0007669"/>
    <property type="project" value="UniProtKB-SubCell"/>
</dbReference>
<dbReference type="GO" id="GO:0005525">
    <property type="term" value="F:GTP binding"/>
    <property type="evidence" value="ECO:0007669"/>
    <property type="project" value="UniProtKB-UniRule"/>
</dbReference>
<dbReference type="GO" id="GO:0003924">
    <property type="term" value="F:GTPase activity"/>
    <property type="evidence" value="ECO:0007669"/>
    <property type="project" value="UniProtKB-UniRule"/>
</dbReference>
<dbReference type="GO" id="GO:0043024">
    <property type="term" value="F:ribosomal small subunit binding"/>
    <property type="evidence" value="ECO:0007669"/>
    <property type="project" value="TreeGrafter"/>
</dbReference>
<dbReference type="GO" id="GO:0070181">
    <property type="term" value="F:small ribosomal subunit rRNA binding"/>
    <property type="evidence" value="ECO:0007669"/>
    <property type="project" value="UniProtKB-UniRule"/>
</dbReference>
<dbReference type="GO" id="GO:0000028">
    <property type="term" value="P:ribosomal small subunit assembly"/>
    <property type="evidence" value="ECO:0007669"/>
    <property type="project" value="TreeGrafter"/>
</dbReference>
<dbReference type="CDD" id="cd04163">
    <property type="entry name" value="Era"/>
    <property type="match status" value="1"/>
</dbReference>
<dbReference type="CDD" id="cd22534">
    <property type="entry name" value="KH-II_Era"/>
    <property type="match status" value="1"/>
</dbReference>
<dbReference type="FunFam" id="3.30.300.20:FF:000003">
    <property type="entry name" value="GTPase Era"/>
    <property type="match status" value="1"/>
</dbReference>
<dbReference type="FunFam" id="3.40.50.300:FF:000094">
    <property type="entry name" value="GTPase Era"/>
    <property type="match status" value="1"/>
</dbReference>
<dbReference type="Gene3D" id="3.30.300.20">
    <property type="match status" value="1"/>
</dbReference>
<dbReference type="Gene3D" id="3.40.50.300">
    <property type="entry name" value="P-loop containing nucleotide triphosphate hydrolases"/>
    <property type="match status" value="1"/>
</dbReference>
<dbReference type="HAMAP" id="MF_00367">
    <property type="entry name" value="GTPase_Era"/>
    <property type="match status" value="1"/>
</dbReference>
<dbReference type="InterPro" id="IPR030388">
    <property type="entry name" value="G_ERA_dom"/>
</dbReference>
<dbReference type="InterPro" id="IPR006073">
    <property type="entry name" value="GTP-bd"/>
</dbReference>
<dbReference type="InterPro" id="IPR005662">
    <property type="entry name" value="GTPase_Era-like"/>
</dbReference>
<dbReference type="InterPro" id="IPR015946">
    <property type="entry name" value="KH_dom-like_a/b"/>
</dbReference>
<dbReference type="InterPro" id="IPR004044">
    <property type="entry name" value="KH_dom_type_2"/>
</dbReference>
<dbReference type="InterPro" id="IPR009019">
    <property type="entry name" value="KH_sf_prok-type"/>
</dbReference>
<dbReference type="InterPro" id="IPR027417">
    <property type="entry name" value="P-loop_NTPase"/>
</dbReference>
<dbReference type="InterPro" id="IPR005225">
    <property type="entry name" value="Small_GTP-bd"/>
</dbReference>
<dbReference type="NCBIfam" id="TIGR00436">
    <property type="entry name" value="era"/>
    <property type="match status" value="1"/>
</dbReference>
<dbReference type="NCBIfam" id="NF000908">
    <property type="entry name" value="PRK00089.1"/>
    <property type="match status" value="1"/>
</dbReference>
<dbReference type="NCBIfam" id="TIGR00231">
    <property type="entry name" value="small_GTP"/>
    <property type="match status" value="1"/>
</dbReference>
<dbReference type="PANTHER" id="PTHR42698">
    <property type="entry name" value="GTPASE ERA"/>
    <property type="match status" value="1"/>
</dbReference>
<dbReference type="PANTHER" id="PTHR42698:SF1">
    <property type="entry name" value="GTPASE ERA, MITOCHONDRIAL"/>
    <property type="match status" value="1"/>
</dbReference>
<dbReference type="Pfam" id="PF07650">
    <property type="entry name" value="KH_2"/>
    <property type="match status" value="1"/>
</dbReference>
<dbReference type="Pfam" id="PF01926">
    <property type="entry name" value="MMR_HSR1"/>
    <property type="match status" value="1"/>
</dbReference>
<dbReference type="SUPFAM" id="SSF52540">
    <property type="entry name" value="P-loop containing nucleoside triphosphate hydrolases"/>
    <property type="match status" value="1"/>
</dbReference>
<dbReference type="SUPFAM" id="SSF54814">
    <property type="entry name" value="Prokaryotic type KH domain (KH-domain type II)"/>
    <property type="match status" value="1"/>
</dbReference>
<dbReference type="PROSITE" id="PS51713">
    <property type="entry name" value="G_ERA"/>
    <property type="match status" value="1"/>
</dbReference>
<dbReference type="PROSITE" id="PS50823">
    <property type="entry name" value="KH_TYPE_2"/>
    <property type="match status" value="1"/>
</dbReference>
<protein>
    <recommendedName>
        <fullName evidence="1">GTPase Era</fullName>
    </recommendedName>
</protein>
<comment type="function">
    <text evidence="1">An essential GTPase that binds both GDP and GTP, with rapid nucleotide exchange. Plays a role in 16S rRNA processing and 30S ribosomal subunit biogenesis and possibly also in cell cycle regulation and energy metabolism.</text>
</comment>
<comment type="subunit">
    <text evidence="1">Monomer.</text>
</comment>
<comment type="subcellular location">
    <subcellularLocation>
        <location>Cytoplasm</location>
    </subcellularLocation>
    <subcellularLocation>
        <location evidence="1">Cell membrane</location>
        <topology evidence="1">Peripheral membrane protein</topology>
    </subcellularLocation>
</comment>
<comment type="similarity">
    <text evidence="1 2">Belongs to the TRAFAC class TrmE-Era-EngA-EngB-Septin-like GTPase superfamily. Era GTPase family.</text>
</comment>
<name>ERA_STRP3</name>
<evidence type="ECO:0000255" key="1">
    <source>
        <dbReference type="HAMAP-Rule" id="MF_00367"/>
    </source>
</evidence>
<evidence type="ECO:0000255" key="2">
    <source>
        <dbReference type="PROSITE-ProRule" id="PRU01050"/>
    </source>
</evidence>
<sequence length="298" mass="34107">MFKSGFVAILGRPNVGKSTFLNHVMGQKIAIMSDKAQTTRNKIMGIYTTETEQIVFIDTPGIHKPKTALGDFMVESAYSTLREVETVLFMVPADEKRGKGDDMIIERLKAAKIPVILVINKIDKVHPDQLLEQIDDFRSQMDFKEVVPISALEGNNVPTLIKLLTDNLEEGFQYFPEDQITDHPERFLVSEMVREKVLHLTQQEVPHSVAVVVESMKRDEETDKVHIRATIMVERDSQKGIIIGKQGAMLKKIGKMARRDIELMLGDKVYLETWVKVKKNWRDKKLDLADFGYNEKEY</sequence>
<keyword id="KW-1003">Cell membrane</keyword>
<keyword id="KW-0963">Cytoplasm</keyword>
<keyword id="KW-0342">GTP-binding</keyword>
<keyword id="KW-0472">Membrane</keyword>
<keyword id="KW-0547">Nucleotide-binding</keyword>
<keyword id="KW-0690">Ribosome biogenesis</keyword>
<keyword id="KW-0694">RNA-binding</keyword>
<keyword id="KW-0699">rRNA-binding</keyword>
<feature type="chain" id="PRO_0000180061" description="GTPase Era">
    <location>
        <begin position="1"/>
        <end position="298"/>
    </location>
</feature>
<feature type="domain" description="Era-type G" evidence="2">
    <location>
        <begin position="3"/>
        <end position="170"/>
    </location>
</feature>
<feature type="domain" description="KH type-2" evidence="1">
    <location>
        <begin position="201"/>
        <end position="279"/>
    </location>
</feature>
<feature type="region of interest" description="G1" evidence="2">
    <location>
        <begin position="11"/>
        <end position="18"/>
    </location>
</feature>
<feature type="region of interest" description="G2" evidence="2">
    <location>
        <begin position="37"/>
        <end position="41"/>
    </location>
</feature>
<feature type="region of interest" description="G3" evidence="2">
    <location>
        <begin position="58"/>
        <end position="61"/>
    </location>
</feature>
<feature type="region of interest" description="G4" evidence="2">
    <location>
        <begin position="120"/>
        <end position="123"/>
    </location>
</feature>
<feature type="region of interest" description="G5" evidence="2">
    <location>
        <begin position="149"/>
        <end position="151"/>
    </location>
</feature>
<feature type="binding site" evidence="1">
    <location>
        <begin position="11"/>
        <end position="18"/>
    </location>
    <ligand>
        <name>GTP</name>
        <dbReference type="ChEBI" id="CHEBI:37565"/>
    </ligand>
</feature>
<feature type="binding site" evidence="1">
    <location>
        <begin position="58"/>
        <end position="62"/>
    </location>
    <ligand>
        <name>GTP</name>
        <dbReference type="ChEBI" id="CHEBI:37565"/>
    </ligand>
</feature>
<feature type="binding site" evidence="1">
    <location>
        <begin position="120"/>
        <end position="123"/>
    </location>
    <ligand>
        <name>GTP</name>
        <dbReference type="ChEBI" id="CHEBI:37565"/>
    </ligand>
</feature>